<reference key="1">
    <citation type="journal article" date="2004" name="Genome Res.">
        <title>The status, quality, and expansion of the NIH full-length cDNA project: the Mammalian Gene Collection (MGC).</title>
        <authorList>
            <consortium name="The MGC Project Team"/>
        </authorList>
    </citation>
    <scope>NUCLEOTIDE SEQUENCE [LARGE SCALE MRNA]</scope>
    <source>
        <tissue>Kidney</tissue>
    </source>
</reference>
<accession>Q68FW8</accession>
<keyword id="KW-0131">Cell cycle</keyword>
<keyword id="KW-0132">Cell division</keyword>
<keyword id="KW-0175">Coiled coil</keyword>
<keyword id="KW-0963">Cytoplasm</keyword>
<keyword id="KW-0206">Cytoskeleton</keyword>
<keyword id="KW-1185">Reference proteome</keyword>
<keyword id="KW-0717">Septation</keyword>
<comment type="function">
    <text evidence="1">Involved in cytokinesis and septation where it has a role in the localization of F-actin.</text>
</comment>
<comment type="subcellular location">
    <subcellularLocation>
        <location evidence="1">Cytoplasm</location>
        <location evidence="1">Cytoskeleton</location>
    </subcellularLocation>
</comment>
<evidence type="ECO:0000250" key="1"/>
<evidence type="ECO:0000255" key="2"/>
<evidence type="ECO:0000255" key="3">
    <source>
        <dbReference type="PROSITE-ProRule" id="PRU00361"/>
    </source>
</evidence>
<protein>
    <recommendedName>
        <fullName>Bridging integrator 3</fullName>
    </recommendedName>
</protein>
<sequence length="253" mass="29691">MSWIPFKIGQPKKQIVSKTVERDFEREYGKLQQLEEQTKRLQKDMKKSTDADLAMSKSAVKISLDLLSNPLCEQDQDFLRMVTALDTAMKRMDAFNQEKVNQIQKTVIEPLKKFGSIFPSLNMAVKRREQALQDYGRLQAKVEKYEEKEKTGPVLAKLHQAREELRPVREDFEAKNKQLLDEMPRFYNSRLDYFQPSFESLIRAQVIYYSEMHKIFGDLTQQLDQPGHSDEHRERENETKLSELRALSIVADD</sequence>
<dbReference type="EMBL" id="BC079146">
    <property type="protein sequence ID" value="AAH79146.1"/>
    <property type="molecule type" value="mRNA"/>
</dbReference>
<dbReference type="RefSeq" id="NP_001013204.1">
    <property type="nucleotide sequence ID" value="NM_001013186.2"/>
</dbReference>
<dbReference type="SMR" id="Q68FW8"/>
<dbReference type="FunCoup" id="Q68FW8">
    <property type="interactions" value="1480"/>
</dbReference>
<dbReference type="STRING" id="10116.ENSRNOP00000024614"/>
<dbReference type="PhosphoSitePlus" id="Q68FW8"/>
<dbReference type="PaxDb" id="10116-ENSRNOP00000024614"/>
<dbReference type="DNASU" id="361065"/>
<dbReference type="Ensembl" id="ENSRNOT00000024614.7">
    <property type="protein sequence ID" value="ENSRNOP00000024614.6"/>
    <property type="gene ID" value="ENSRNOG00000018023.8"/>
</dbReference>
<dbReference type="GeneID" id="361065"/>
<dbReference type="KEGG" id="rno:361065"/>
<dbReference type="UCSC" id="RGD:1308253">
    <property type="organism name" value="rat"/>
</dbReference>
<dbReference type="AGR" id="RGD:1308253"/>
<dbReference type="CTD" id="55909"/>
<dbReference type="RGD" id="1308253">
    <property type="gene designation" value="Bin3"/>
</dbReference>
<dbReference type="eggNOG" id="KOG3771">
    <property type="taxonomic scope" value="Eukaryota"/>
</dbReference>
<dbReference type="GeneTree" id="ENSGT00950000182882"/>
<dbReference type="HOGENOM" id="CLU_090113_1_0_1"/>
<dbReference type="InParanoid" id="Q68FW8"/>
<dbReference type="OMA" id="TRFCAYF"/>
<dbReference type="OrthoDB" id="38387at9989"/>
<dbReference type="PhylomeDB" id="Q68FW8"/>
<dbReference type="PRO" id="PR:Q68FW8"/>
<dbReference type="Proteomes" id="UP000002494">
    <property type="component" value="Chromosome 15"/>
</dbReference>
<dbReference type="Bgee" id="ENSRNOG00000018023">
    <property type="expression patterns" value="Expressed in spleen and 20 other cell types or tissues"/>
</dbReference>
<dbReference type="ExpressionAtlas" id="Q68FW8">
    <property type="expression patterns" value="baseline and differential"/>
</dbReference>
<dbReference type="GO" id="GO:0015629">
    <property type="term" value="C:actin cytoskeleton"/>
    <property type="evidence" value="ECO:0000266"/>
    <property type="project" value="RGD"/>
</dbReference>
<dbReference type="GO" id="GO:0005737">
    <property type="term" value="C:cytoplasm"/>
    <property type="evidence" value="ECO:0007669"/>
    <property type="project" value="UniProtKB-KW"/>
</dbReference>
<dbReference type="GO" id="GO:0051666">
    <property type="term" value="P:actin cortical patch localization"/>
    <property type="evidence" value="ECO:0000318"/>
    <property type="project" value="GO_Central"/>
</dbReference>
<dbReference type="GO" id="GO:0051301">
    <property type="term" value="P:cell division"/>
    <property type="evidence" value="ECO:0007669"/>
    <property type="project" value="UniProtKB-KW"/>
</dbReference>
<dbReference type="GO" id="GO:0006897">
    <property type="term" value="P:endocytosis"/>
    <property type="evidence" value="ECO:0000318"/>
    <property type="project" value="GO_Central"/>
</dbReference>
<dbReference type="GO" id="GO:0014839">
    <property type="term" value="P:myoblast migration involved in skeletal muscle regeneration"/>
    <property type="evidence" value="ECO:0000266"/>
    <property type="project" value="RGD"/>
</dbReference>
<dbReference type="GO" id="GO:0097320">
    <property type="term" value="P:plasma membrane tubulation"/>
    <property type="evidence" value="ECO:0000318"/>
    <property type="project" value="GO_Central"/>
</dbReference>
<dbReference type="GO" id="GO:0008104">
    <property type="term" value="P:protein localization"/>
    <property type="evidence" value="ECO:0000266"/>
    <property type="project" value="RGD"/>
</dbReference>
<dbReference type="GO" id="GO:0010591">
    <property type="term" value="P:regulation of lamellipodium assembly"/>
    <property type="evidence" value="ECO:0000266"/>
    <property type="project" value="RGD"/>
</dbReference>
<dbReference type="GO" id="GO:0048741">
    <property type="term" value="P:skeletal muscle fiber development"/>
    <property type="evidence" value="ECO:0000266"/>
    <property type="project" value="RGD"/>
</dbReference>
<dbReference type="GO" id="GO:0043403">
    <property type="term" value="P:skeletal muscle tissue regeneration"/>
    <property type="evidence" value="ECO:0000266"/>
    <property type="project" value="RGD"/>
</dbReference>
<dbReference type="GO" id="GO:0009826">
    <property type="term" value="P:unidimensional cell growth"/>
    <property type="evidence" value="ECO:0000266"/>
    <property type="project" value="RGD"/>
</dbReference>
<dbReference type="CDD" id="cd07590">
    <property type="entry name" value="BAR_Bin3"/>
    <property type="match status" value="1"/>
</dbReference>
<dbReference type="FunFam" id="1.20.1270.60:FF:000028">
    <property type="entry name" value="Bridging integrator 3 homolog"/>
    <property type="match status" value="1"/>
</dbReference>
<dbReference type="Gene3D" id="1.20.1270.60">
    <property type="entry name" value="Arfaptin homology (AH) domain/BAR domain"/>
    <property type="match status" value="1"/>
</dbReference>
<dbReference type="InterPro" id="IPR027267">
    <property type="entry name" value="AH/BAR_dom_sf"/>
</dbReference>
<dbReference type="InterPro" id="IPR004148">
    <property type="entry name" value="BAR_dom"/>
</dbReference>
<dbReference type="InterPro" id="IPR046982">
    <property type="entry name" value="BIN3/RVS161-like"/>
</dbReference>
<dbReference type="InterPro" id="IPR037428">
    <property type="entry name" value="Bin3_BAR"/>
</dbReference>
<dbReference type="PANTHER" id="PTHR47174">
    <property type="entry name" value="BRIDGING INTEGRATOR 3"/>
    <property type="match status" value="1"/>
</dbReference>
<dbReference type="PANTHER" id="PTHR47174:SF3">
    <property type="entry name" value="BRIDGING INTEGRATOR 3"/>
    <property type="match status" value="1"/>
</dbReference>
<dbReference type="Pfam" id="PF03114">
    <property type="entry name" value="BAR"/>
    <property type="match status" value="1"/>
</dbReference>
<dbReference type="SMART" id="SM00721">
    <property type="entry name" value="BAR"/>
    <property type="match status" value="1"/>
</dbReference>
<dbReference type="SUPFAM" id="SSF103657">
    <property type="entry name" value="BAR/IMD domain-like"/>
    <property type="match status" value="1"/>
</dbReference>
<dbReference type="PROSITE" id="PS51021">
    <property type="entry name" value="BAR"/>
    <property type="match status" value="1"/>
</dbReference>
<proteinExistence type="evidence at transcript level"/>
<organism>
    <name type="scientific">Rattus norvegicus</name>
    <name type="common">Rat</name>
    <dbReference type="NCBI Taxonomy" id="10116"/>
    <lineage>
        <taxon>Eukaryota</taxon>
        <taxon>Metazoa</taxon>
        <taxon>Chordata</taxon>
        <taxon>Craniata</taxon>
        <taxon>Vertebrata</taxon>
        <taxon>Euteleostomi</taxon>
        <taxon>Mammalia</taxon>
        <taxon>Eutheria</taxon>
        <taxon>Euarchontoglires</taxon>
        <taxon>Glires</taxon>
        <taxon>Rodentia</taxon>
        <taxon>Myomorpha</taxon>
        <taxon>Muroidea</taxon>
        <taxon>Muridae</taxon>
        <taxon>Murinae</taxon>
        <taxon>Rattus</taxon>
    </lineage>
</organism>
<feature type="chain" id="PRO_0000192957" description="Bridging integrator 3">
    <location>
        <begin position="1"/>
        <end position="253"/>
    </location>
</feature>
<feature type="domain" description="BAR" evidence="3">
    <location>
        <begin position="9"/>
        <end position="232"/>
    </location>
</feature>
<feature type="coiled-coil region" evidence="2">
    <location>
        <begin position="16"/>
        <end position="57"/>
    </location>
</feature>
<feature type="coiled-coil region" evidence="2">
    <location>
        <begin position="120"/>
        <end position="151"/>
    </location>
</feature>
<name>BIN3_RAT</name>
<gene>
    <name type="primary">Bin3</name>
</gene>